<evidence type="ECO:0000250" key="1"/>
<evidence type="ECO:0000255" key="2"/>
<evidence type="ECO:0000256" key="3">
    <source>
        <dbReference type="SAM" id="MobiDB-lite"/>
    </source>
</evidence>
<evidence type="ECO:0000269" key="4">
    <source>
    </source>
</evidence>
<evidence type="ECO:0000305" key="5"/>
<evidence type="ECO:0007744" key="6">
    <source>
    </source>
</evidence>
<evidence type="ECO:0007744" key="7">
    <source>
    </source>
</evidence>
<evidence type="ECO:0007744" key="8">
    <source>
    </source>
</evidence>
<proteinExistence type="evidence at protein level"/>
<reference key="1">
    <citation type="journal article" date="2004" name="Nature">
        <title>The DNA sequence and biology of human chromosome 19.</title>
        <authorList>
            <person name="Grimwood J."/>
            <person name="Gordon L.A."/>
            <person name="Olsen A.S."/>
            <person name="Terry A."/>
            <person name="Schmutz J."/>
            <person name="Lamerdin J.E."/>
            <person name="Hellsten U."/>
            <person name="Goodstein D."/>
            <person name="Couronne O."/>
            <person name="Tran-Gyamfi M."/>
            <person name="Aerts A."/>
            <person name="Altherr M."/>
            <person name="Ashworth L."/>
            <person name="Bajorek E."/>
            <person name="Black S."/>
            <person name="Branscomb E."/>
            <person name="Caenepeel S."/>
            <person name="Carrano A.V."/>
            <person name="Caoile C."/>
            <person name="Chan Y.M."/>
            <person name="Christensen M."/>
            <person name="Cleland C.A."/>
            <person name="Copeland A."/>
            <person name="Dalin E."/>
            <person name="Dehal P."/>
            <person name="Denys M."/>
            <person name="Detter J.C."/>
            <person name="Escobar J."/>
            <person name="Flowers D."/>
            <person name="Fotopulos D."/>
            <person name="Garcia C."/>
            <person name="Georgescu A.M."/>
            <person name="Glavina T."/>
            <person name="Gomez M."/>
            <person name="Gonzales E."/>
            <person name="Groza M."/>
            <person name="Hammon N."/>
            <person name="Hawkins T."/>
            <person name="Haydu L."/>
            <person name="Ho I."/>
            <person name="Huang W."/>
            <person name="Israni S."/>
            <person name="Jett J."/>
            <person name="Kadner K."/>
            <person name="Kimball H."/>
            <person name="Kobayashi A."/>
            <person name="Larionov V."/>
            <person name="Leem S.-H."/>
            <person name="Lopez F."/>
            <person name="Lou Y."/>
            <person name="Lowry S."/>
            <person name="Malfatti S."/>
            <person name="Martinez D."/>
            <person name="McCready P.M."/>
            <person name="Medina C."/>
            <person name="Morgan J."/>
            <person name="Nelson K."/>
            <person name="Nolan M."/>
            <person name="Ovcharenko I."/>
            <person name="Pitluck S."/>
            <person name="Pollard M."/>
            <person name="Popkie A.P."/>
            <person name="Predki P."/>
            <person name="Quan G."/>
            <person name="Ramirez L."/>
            <person name="Rash S."/>
            <person name="Retterer J."/>
            <person name="Rodriguez A."/>
            <person name="Rogers S."/>
            <person name="Salamov A."/>
            <person name="Salazar A."/>
            <person name="She X."/>
            <person name="Smith D."/>
            <person name="Slezak T."/>
            <person name="Solovyev V."/>
            <person name="Thayer N."/>
            <person name="Tice H."/>
            <person name="Tsai M."/>
            <person name="Ustaszewska A."/>
            <person name="Vo N."/>
            <person name="Wagner M."/>
            <person name="Wheeler J."/>
            <person name="Wu K."/>
            <person name="Xie G."/>
            <person name="Yang J."/>
            <person name="Dubchak I."/>
            <person name="Furey T.S."/>
            <person name="DeJong P."/>
            <person name="Dickson M."/>
            <person name="Gordon D."/>
            <person name="Eichler E.E."/>
            <person name="Pennacchio L.A."/>
            <person name="Richardson P."/>
            <person name="Stubbs L."/>
            <person name="Rokhsar D.S."/>
            <person name="Myers R.M."/>
            <person name="Rubin E.M."/>
            <person name="Lucas S.M."/>
        </authorList>
    </citation>
    <scope>NUCLEOTIDE SEQUENCE [LARGE SCALE GENOMIC DNA]</scope>
</reference>
<reference key="2">
    <citation type="journal article" date="2007" name="Science">
        <title>ATM and ATR substrate analysis reveals extensive protein networks responsive to DNA damage.</title>
        <authorList>
            <person name="Matsuoka S."/>
            <person name="Ballif B.A."/>
            <person name="Smogorzewska A."/>
            <person name="McDonald E.R. III"/>
            <person name="Hurov K.E."/>
            <person name="Luo J."/>
            <person name="Bakalarski C.E."/>
            <person name="Zhao Z."/>
            <person name="Solimini N."/>
            <person name="Lerenthal Y."/>
            <person name="Shiloh Y."/>
            <person name="Gygi S.P."/>
            <person name="Elledge S.J."/>
        </authorList>
    </citation>
    <scope>IDENTIFICATION BY MASS SPECTROMETRY [LARGE SCALE ANALYSIS]</scope>
    <source>
        <tissue>Embryonic kidney</tissue>
    </source>
</reference>
<reference key="3">
    <citation type="journal article" date="2011" name="Biochem. Biophys. Res. Commun.">
        <title>A novel binding protein of single immunoglobulin IL-1 receptor-related molecule: Paralemmin-3.</title>
        <authorList>
            <person name="Chen X."/>
            <person name="Wu X."/>
            <person name="Zhao Y."/>
            <person name="Wang G."/>
            <person name="Feng J."/>
            <person name="Li Q."/>
            <person name="Qian G."/>
        </authorList>
    </citation>
    <scope>FUNCTION</scope>
    <scope>INTERACTION WITH SIGIRR</scope>
    <scope>INDUCTION</scope>
</reference>
<reference key="4">
    <citation type="journal article" date="2011" name="Sci. Signal.">
        <title>System-wide temporal characterization of the proteome and phosphoproteome of human embryonic stem cell differentiation.</title>
        <authorList>
            <person name="Rigbolt K.T."/>
            <person name="Prokhorova T.A."/>
            <person name="Akimov V."/>
            <person name="Henningsen J."/>
            <person name="Johansen P.T."/>
            <person name="Kratchmarova I."/>
            <person name="Kassem M."/>
            <person name="Mann M."/>
            <person name="Olsen J.V."/>
            <person name="Blagoev B."/>
        </authorList>
    </citation>
    <scope>PHOSPHORYLATION [LARGE SCALE ANALYSIS] AT THR-301 AND SER-375</scope>
    <scope>IDENTIFICATION BY MASS SPECTROMETRY [LARGE SCALE ANALYSIS]</scope>
</reference>
<reference key="5">
    <citation type="journal article" date="2013" name="J. Proteome Res.">
        <title>Toward a comprehensive characterization of a human cancer cell phosphoproteome.</title>
        <authorList>
            <person name="Zhou H."/>
            <person name="Di Palma S."/>
            <person name="Preisinger C."/>
            <person name="Peng M."/>
            <person name="Polat A.N."/>
            <person name="Heck A.J."/>
            <person name="Mohammed S."/>
        </authorList>
    </citation>
    <scope>PHOSPHORYLATION [LARGE SCALE ANALYSIS] AT THR-151; SER-375 AND SER-420</scope>
    <scope>IDENTIFICATION BY MASS SPECTROMETRY [LARGE SCALE ANALYSIS]</scope>
    <source>
        <tissue>Erythroleukemia</tissue>
    </source>
</reference>
<reference key="6">
    <citation type="journal article" date="2014" name="J. Proteomics">
        <title>An enzyme assisted RP-RPLC approach for in-depth analysis of human liver phosphoproteome.</title>
        <authorList>
            <person name="Bian Y."/>
            <person name="Song C."/>
            <person name="Cheng K."/>
            <person name="Dong M."/>
            <person name="Wang F."/>
            <person name="Huang J."/>
            <person name="Sun D."/>
            <person name="Wang L."/>
            <person name="Ye M."/>
            <person name="Zou H."/>
        </authorList>
    </citation>
    <scope>PHOSPHORYLATION [LARGE SCALE ANALYSIS] AT SER-124; SER-143; THR-151; SER-155; SER-157; SER-260; SER-325; SER-375; SER-420; SER-544 AND SER-660</scope>
    <scope>IDENTIFICATION BY MASS SPECTROMETRY [LARGE SCALE ANALYSIS]</scope>
    <source>
        <tissue>Liver</tissue>
    </source>
</reference>
<keyword id="KW-0067">ATP-binding</keyword>
<keyword id="KW-1003">Cell membrane</keyword>
<keyword id="KW-0175">Coiled coil</keyword>
<keyword id="KW-0963">Cytoplasm</keyword>
<keyword id="KW-0449">Lipoprotein</keyword>
<keyword id="KW-0472">Membrane</keyword>
<keyword id="KW-0488">Methylation</keyword>
<keyword id="KW-0547">Nucleotide-binding</keyword>
<keyword id="KW-0564">Palmitate</keyword>
<keyword id="KW-0597">Phosphoprotein</keyword>
<keyword id="KW-0636">Prenylation</keyword>
<keyword id="KW-1267">Proteomics identification</keyword>
<keyword id="KW-1185">Reference proteome</keyword>
<keyword id="KW-0677">Repeat</keyword>
<feature type="chain" id="PRO_0000332171" description="Paralemmin-3">
    <location>
        <begin position="1"/>
        <end position="670"/>
    </location>
</feature>
<feature type="propeptide" id="PRO_0000332172" description="Removed in mature form" evidence="1">
    <location>
        <begin position="671"/>
        <end position="673"/>
    </location>
</feature>
<feature type="region of interest" description="Disordered" evidence="3">
    <location>
        <begin position="49"/>
        <end position="78"/>
    </location>
</feature>
<feature type="region of interest" description="Disordered" evidence="3">
    <location>
        <begin position="99"/>
        <end position="213"/>
    </location>
</feature>
<feature type="region of interest" description="Disordered" evidence="3">
    <location>
        <begin position="295"/>
        <end position="343"/>
    </location>
</feature>
<feature type="region of interest" description="Disordered" evidence="3">
    <location>
        <begin position="356"/>
        <end position="673"/>
    </location>
</feature>
<feature type="coiled-coil region" evidence="2">
    <location>
        <begin position="4"/>
        <end position="49"/>
    </location>
</feature>
<feature type="coiled-coil region" evidence="2">
    <location>
        <begin position="75"/>
        <end position="101"/>
    </location>
</feature>
<feature type="compositionally biased region" description="Polar residues" evidence="3">
    <location>
        <begin position="123"/>
        <end position="137"/>
    </location>
</feature>
<feature type="compositionally biased region" description="Gly residues" evidence="3">
    <location>
        <begin position="327"/>
        <end position="338"/>
    </location>
</feature>
<feature type="compositionally biased region" description="Basic and acidic residues" evidence="3">
    <location>
        <begin position="392"/>
        <end position="477"/>
    </location>
</feature>
<feature type="compositionally biased region" description="Basic and acidic residues" evidence="3">
    <location>
        <begin position="487"/>
        <end position="532"/>
    </location>
</feature>
<feature type="modified residue" description="Phosphoserine" evidence="8">
    <location>
        <position position="124"/>
    </location>
</feature>
<feature type="modified residue" description="Phosphoserine" evidence="8">
    <location>
        <position position="143"/>
    </location>
</feature>
<feature type="modified residue" description="Phosphothreonine" evidence="7 8">
    <location>
        <position position="151"/>
    </location>
</feature>
<feature type="modified residue" description="Phosphoserine" evidence="8">
    <location>
        <position position="155"/>
    </location>
</feature>
<feature type="modified residue" description="Phosphoserine" evidence="8">
    <location>
        <position position="157"/>
    </location>
</feature>
<feature type="modified residue" description="Phosphoserine" evidence="8">
    <location>
        <position position="260"/>
    </location>
</feature>
<feature type="modified residue" description="Phosphothreonine" evidence="6">
    <location>
        <position position="301"/>
    </location>
</feature>
<feature type="modified residue" description="Phosphoserine" evidence="8">
    <location>
        <position position="325"/>
    </location>
</feature>
<feature type="modified residue" description="Phosphoserine" evidence="6 7 8">
    <location>
        <position position="375"/>
    </location>
</feature>
<feature type="modified residue" description="Phosphoserine" evidence="7 8">
    <location>
        <position position="420"/>
    </location>
</feature>
<feature type="modified residue" description="Phosphoserine" evidence="8">
    <location>
        <position position="544"/>
    </location>
</feature>
<feature type="modified residue" description="Phosphoserine" evidence="8">
    <location>
        <position position="660"/>
    </location>
</feature>
<feature type="modified residue" description="Cysteine methyl ester" evidence="1">
    <location>
        <position position="670"/>
    </location>
</feature>
<feature type="lipid moiety-binding region" description="S-palmitoyl cysteine" evidence="1">
    <location>
        <position position="667"/>
    </location>
</feature>
<feature type="lipid moiety-binding region" description="S-palmitoyl cysteine" evidence="1">
    <location>
        <position position="669"/>
    </location>
</feature>
<feature type="lipid moiety-binding region" description="S-farnesyl cysteine" evidence="1">
    <location>
        <position position="670"/>
    </location>
</feature>
<feature type="sequence variant" id="VAR_053804" description="In dbSNP:rs11880169.">
    <original>A</original>
    <variation>T</variation>
    <location>
        <position position="440"/>
    </location>
</feature>
<organism>
    <name type="scientific">Homo sapiens</name>
    <name type="common">Human</name>
    <dbReference type="NCBI Taxonomy" id="9606"/>
    <lineage>
        <taxon>Eukaryota</taxon>
        <taxon>Metazoa</taxon>
        <taxon>Chordata</taxon>
        <taxon>Craniata</taxon>
        <taxon>Vertebrata</taxon>
        <taxon>Euteleostomi</taxon>
        <taxon>Mammalia</taxon>
        <taxon>Eutheria</taxon>
        <taxon>Euarchontoglires</taxon>
        <taxon>Primates</taxon>
        <taxon>Haplorrhini</taxon>
        <taxon>Catarrhini</taxon>
        <taxon>Hominidae</taxon>
        <taxon>Homo</taxon>
    </lineage>
</organism>
<dbReference type="EMBL" id="AC022098">
    <property type="status" value="NOT_ANNOTATED_CDS"/>
    <property type="molecule type" value="Genomic_DNA"/>
</dbReference>
<dbReference type="RefSeq" id="NP_001138500.1">
    <property type="nucleotide sequence ID" value="NM_001145028.1"/>
</dbReference>
<dbReference type="SMR" id="A6NDB9"/>
<dbReference type="BioGRID" id="131220">
    <property type="interactions" value="13"/>
</dbReference>
<dbReference type="FunCoup" id="A6NDB9">
    <property type="interactions" value="67"/>
</dbReference>
<dbReference type="IntAct" id="A6NDB9">
    <property type="interactions" value="14"/>
</dbReference>
<dbReference type="MINT" id="A6NDB9"/>
<dbReference type="STRING" id="9606.ENSP00000344996"/>
<dbReference type="GlyGen" id="A6NDB9">
    <property type="glycosylation" value="1 site"/>
</dbReference>
<dbReference type="iPTMnet" id="A6NDB9"/>
<dbReference type="PhosphoSitePlus" id="A6NDB9"/>
<dbReference type="SwissPalm" id="A6NDB9"/>
<dbReference type="BioMuta" id="PALM3"/>
<dbReference type="jPOST" id="A6NDB9"/>
<dbReference type="MassIVE" id="A6NDB9"/>
<dbReference type="PaxDb" id="9606-ENSP00000344996"/>
<dbReference type="PeptideAtlas" id="A6NDB9"/>
<dbReference type="ProteomicsDB" id="898"/>
<dbReference type="Pumba" id="A6NDB9"/>
<dbReference type="Antibodypedia" id="57000">
    <property type="antibodies" value="90 antibodies from 20 providers"/>
</dbReference>
<dbReference type="DNASU" id="342979"/>
<dbReference type="Ensembl" id="ENST00000340790.9">
    <property type="protein sequence ID" value="ENSP00000344996.3"/>
    <property type="gene ID" value="ENSG00000187867.10"/>
</dbReference>
<dbReference type="Ensembl" id="ENST00000672551.1">
    <property type="protein sequence ID" value="ENSP00000500424.1"/>
    <property type="gene ID" value="ENSG00000288318.1"/>
</dbReference>
<dbReference type="GeneID" id="342979"/>
<dbReference type="KEGG" id="hsa:342979"/>
<dbReference type="UCSC" id="uc010xnk.2">
    <property type="organism name" value="human"/>
</dbReference>
<dbReference type="AGR" id="HGNC:33274"/>
<dbReference type="CTD" id="342979"/>
<dbReference type="DisGeNET" id="342979"/>
<dbReference type="GeneCards" id="PALM3"/>
<dbReference type="HGNC" id="HGNC:33274">
    <property type="gene designation" value="PALM3"/>
</dbReference>
<dbReference type="HPA" id="ENSG00000187867">
    <property type="expression patterns" value="Tissue enhanced (kidney, liver, stomach)"/>
</dbReference>
<dbReference type="MIM" id="621051">
    <property type="type" value="gene"/>
</dbReference>
<dbReference type="neXtProt" id="NX_A6NDB9"/>
<dbReference type="OpenTargets" id="ENSG00000187867"/>
<dbReference type="PharmGKB" id="PA165393890"/>
<dbReference type="VEuPathDB" id="HostDB:ENSG00000187867"/>
<dbReference type="eggNOG" id="ENOG502S32R">
    <property type="taxonomic scope" value="Eukaryota"/>
</dbReference>
<dbReference type="GeneTree" id="ENSGT00390000009016"/>
<dbReference type="HOGENOM" id="CLU_401664_0_0_1"/>
<dbReference type="InParanoid" id="A6NDB9"/>
<dbReference type="OMA" id="DWEELLM"/>
<dbReference type="OrthoDB" id="9838391at2759"/>
<dbReference type="PAN-GO" id="A6NDB9">
    <property type="GO annotations" value="3 GO annotations based on evolutionary models"/>
</dbReference>
<dbReference type="PhylomeDB" id="A6NDB9"/>
<dbReference type="TreeFam" id="TF337206"/>
<dbReference type="PathwayCommons" id="A6NDB9"/>
<dbReference type="SignaLink" id="A6NDB9"/>
<dbReference type="BioGRID-ORCS" id="342979">
    <property type="hits" value="11 hits in 1150 CRISPR screens"/>
</dbReference>
<dbReference type="ChiTaRS" id="PALM3">
    <property type="organism name" value="human"/>
</dbReference>
<dbReference type="GenomeRNAi" id="342979"/>
<dbReference type="Pharos" id="A6NDB9">
    <property type="development level" value="Tbio"/>
</dbReference>
<dbReference type="PRO" id="PR:A6NDB9"/>
<dbReference type="Proteomes" id="UP000005640">
    <property type="component" value="Chromosome 19"/>
</dbReference>
<dbReference type="RNAct" id="A6NDB9">
    <property type="molecule type" value="protein"/>
</dbReference>
<dbReference type="Bgee" id="ENSG00000187867">
    <property type="expression patterns" value="Expressed in metanephros cortex and 90 other cell types or tissues"/>
</dbReference>
<dbReference type="ExpressionAtlas" id="A6NDB9">
    <property type="expression patterns" value="baseline and differential"/>
</dbReference>
<dbReference type="GO" id="GO:0005737">
    <property type="term" value="C:cytoplasm"/>
    <property type="evidence" value="ECO:0007669"/>
    <property type="project" value="UniProtKB-SubCell"/>
</dbReference>
<dbReference type="GO" id="GO:0005886">
    <property type="term" value="C:plasma membrane"/>
    <property type="evidence" value="ECO:0007669"/>
    <property type="project" value="UniProtKB-SubCell"/>
</dbReference>
<dbReference type="GO" id="GO:0005524">
    <property type="term" value="F:ATP binding"/>
    <property type="evidence" value="ECO:0007669"/>
    <property type="project" value="UniProtKB-KW"/>
</dbReference>
<dbReference type="GO" id="GO:0001960">
    <property type="term" value="P:negative regulation of cytokine-mediated signaling pathway"/>
    <property type="evidence" value="ECO:0000314"/>
    <property type="project" value="UniProtKB"/>
</dbReference>
<dbReference type="GO" id="GO:0008360">
    <property type="term" value="P:regulation of cell shape"/>
    <property type="evidence" value="ECO:0007669"/>
    <property type="project" value="InterPro"/>
</dbReference>
<dbReference type="GO" id="GO:0032496">
    <property type="term" value="P:response to lipopolysaccharide"/>
    <property type="evidence" value="ECO:0000314"/>
    <property type="project" value="UniProtKB"/>
</dbReference>
<dbReference type="GO" id="GO:0008063">
    <property type="term" value="P:Toll signaling pathway"/>
    <property type="evidence" value="ECO:0000315"/>
    <property type="project" value="UniProtKB"/>
</dbReference>
<dbReference type="InterPro" id="IPR004965">
    <property type="entry name" value="Paralemmin"/>
</dbReference>
<dbReference type="InterPro" id="IPR024149">
    <property type="entry name" value="Paralemmin-3"/>
</dbReference>
<dbReference type="PANTHER" id="PTHR47528">
    <property type="entry name" value="PARALEMMIN-3"/>
    <property type="match status" value="1"/>
</dbReference>
<dbReference type="PANTHER" id="PTHR47528:SF1">
    <property type="entry name" value="PARALEMMIN-3"/>
    <property type="match status" value="1"/>
</dbReference>
<dbReference type="Pfam" id="PF03285">
    <property type="entry name" value="Paralemmin"/>
    <property type="match status" value="1"/>
</dbReference>
<protein>
    <recommendedName>
        <fullName>Paralemmin-3</fullName>
    </recommendedName>
</protein>
<accession>A6NDB9</accession>
<gene>
    <name type="primary">PALM3</name>
</gene>
<name>PALM3_HUMAN</name>
<sequence>MAESSLYRQRLEVIAEKRRLQEEIRAARREVEEEKLRVERLKRKSLRERWLMDGAAAVPEPSEDPTSKDPQSPEGQAQARIRNLEDSLFTLQSQLQLLQSASTGAQHKPSGRPSWRRQGHRPLSQSIVEAGSVGQTDLNKRASLPAGLVGTPPESPSEPREDVLGFLPGPRQVPGAAGDSSEANGPCPSPIPTPEQGLSQRAVPSEGRVGEAKGGGVVSVVWEGLRATEDCATGATGPELEAKVEEVVLEAIGDRKGAGSLELPAWVKEDRGIVEVVWEGVGGSDAEAMGEIGRVPEVVQTSSPRLQERLEAAASIEGEDVPQGSPEGDGQGGSGGEEGSFIWVERVTLSEEWEELLVEGLEGPEVAGRERGDESPLGAEGAKTGGGEETWEAEKRKAEESMGIGSEEKPGTGRDEAEMSPVVERKGGEKKLELESRGSAEKLGTEREGGEEPLGIERKVEGHLRAEKEGDEEKRGAEEEEVEEPLGVEKKGGEEEPEATKEPLEAERKGGEETLEAEKRGGEESLETEKTQGTEGDLNLEQGSREGSESQAEEMNEAGPPLEANTETRPEKEGPQPQEKPVGALEEEGVKPQTAAEGQGPLGDATPLLAETPAPEQPAECQPLLQGEGPSANPSAHPVPTYAPARQPEPSAPTEGEEASGPKQKTCQCCAVM</sequence>
<comment type="function">
    <text evidence="4">ATP-binding protein, which may act as a adapter in the Toll-like receptor (TLR) signaling.</text>
</comment>
<comment type="subunit">
    <text evidence="4">Interacts with SIGIRR.</text>
</comment>
<comment type="interaction">
    <interactant intactId="EBI-6873185">
        <id>A6NDB9</id>
    </interactant>
    <interactant intactId="EBI-719672">
        <id>Q6IA17</id>
        <label>SIGIRR</label>
    </interactant>
    <organismsDiffer>false</organismsDiffer>
    <experiments>4</experiments>
</comment>
<comment type="subcellular location">
    <subcellularLocation>
        <location evidence="1">Cytoplasm</location>
    </subcellularLocation>
    <subcellularLocation>
        <location evidence="1">Cell membrane</location>
        <topology evidence="1">Lipid-anchor</topology>
    </subcellularLocation>
</comment>
<comment type="induction">
    <text evidence="4">Up-regulated by bacterial lipopolysaccharides (LPS).</text>
</comment>
<comment type="PTM">
    <text evidence="1">Palmitoylated on Cys-667 and Cys-669 and prenylated on Cys-670; which is required for membrane association.</text>
</comment>
<comment type="similarity">
    <text evidence="5">Belongs to the paralemmin family.</text>
</comment>